<protein>
    <recommendedName>
        <fullName>Probable endonuclease LCL3</fullName>
        <ecNumber>3.1.-.-</ecNumber>
    </recommendedName>
</protein>
<proteinExistence type="inferred from homology"/>
<organism>
    <name type="scientific">Candida albicans (strain WO-1)</name>
    <name type="common">Yeast</name>
    <dbReference type="NCBI Taxonomy" id="294748"/>
    <lineage>
        <taxon>Eukaryota</taxon>
        <taxon>Fungi</taxon>
        <taxon>Dikarya</taxon>
        <taxon>Ascomycota</taxon>
        <taxon>Saccharomycotina</taxon>
        <taxon>Pichiomycetes</taxon>
        <taxon>Debaryomycetaceae</taxon>
        <taxon>Candida/Lodderomyces clade</taxon>
        <taxon>Candida</taxon>
    </lineage>
</organism>
<name>LCL3_CANAW</name>
<comment type="subcellular location">
    <subcellularLocation>
        <location>Mitochondrion</location>
    </subcellularLocation>
    <subcellularLocation>
        <location evidence="1">Membrane</location>
        <topology evidence="1">Single-pass membrane protein</topology>
    </subcellularLocation>
</comment>
<comment type="similarity">
    <text evidence="4">Belongs to the LCL3 family.</text>
</comment>
<feature type="chain" id="PRO_0000408651" description="Probable endonuclease LCL3">
    <location>
        <begin position="1"/>
        <end position="235"/>
    </location>
</feature>
<feature type="transmembrane region" description="Helical" evidence="2">
    <location>
        <begin position="15"/>
        <end position="37"/>
    </location>
</feature>
<feature type="domain" description="TNase-like" evidence="3">
    <location>
        <begin position="59"/>
        <end position="217"/>
    </location>
</feature>
<feature type="active site" evidence="3">
    <location>
        <position position="108"/>
    </location>
</feature>
<feature type="active site" evidence="3">
    <location>
        <position position="116"/>
    </location>
</feature>
<feature type="active site" evidence="3">
    <location>
        <position position="156"/>
    </location>
</feature>
<feature type="binding site" evidence="3">
    <location>
        <position position="113"/>
    </location>
    <ligand>
        <name>Ca(2+)</name>
        <dbReference type="ChEBI" id="CHEBI:29108"/>
    </ligand>
</feature>
<dbReference type="EC" id="3.1.-.-"/>
<dbReference type="EMBL" id="CH672346">
    <property type="protein sequence ID" value="EEQ41888.1"/>
    <property type="molecule type" value="Genomic_DNA"/>
</dbReference>
<dbReference type="SMR" id="C4YFU9"/>
<dbReference type="PaxDb" id="5476-C4YFU9"/>
<dbReference type="VEuPathDB" id="FungiDB:CAWG_00075"/>
<dbReference type="HOGENOM" id="CLU_046484_0_1_1"/>
<dbReference type="OMA" id="IYHTPGG"/>
<dbReference type="OrthoDB" id="453at766764"/>
<dbReference type="Proteomes" id="UP000001429">
    <property type="component" value="Chromosome 1, Supercontig 1.1"/>
</dbReference>
<dbReference type="GO" id="GO:0016020">
    <property type="term" value="C:membrane"/>
    <property type="evidence" value="ECO:0007669"/>
    <property type="project" value="UniProtKB-SubCell"/>
</dbReference>
<dbReference type="GO" id="GO:0005739">
    <property type="term" value="C:mitochondrion"/>
    <property type="evidence" value="ECO:0007669"/>
    <property type="project" value="UniProtKB-SubCell"/>
</dbReference>
<dbReference type="GO" id="GO:0004519">
    <property type="term" value="F:endonuclease activity"/>
    <property type="evidence" value="ECO:0007669"/>
    <property type="project" value="UniProtKB-KW"/>
</dbReference>
<dbReference type="GO" id="GO:0046872">
    <property type="term" value="F:metal ion binding"/>
    <property type="evidence" value="ECO:0007669"/>
    <property type="project" value="UniProtKB-KW"/>
</dbReference>
<dbReference type="FunFam" id="2.40.50.90:FF:000035">
    <property type="entry name" value="Probable endonuclease LCL3"/>
    <property type="match status" value="1"/>
</dbReference>
<dbReference type="Gene3D" id="2.40.50.90">
    <property type="match status" value="1"/>
</dbReference>
<dbReference type="InterPro" id="IPR035437">
    <property type="entry name" value="SNase_OB-fold_sf"/>
</dbReference>
<dbReference type="InterPro" id="IPR016071">
    <property type="entry name" value="Staphylococal_nuclease_OB-fold"/>
</dbReference>
<dbReference type="PANTHER" id="PTHR12302">
    <property type="entry name" value="EBNA2 BINDING PROTEIN P100"/>
    <property type="match status" value="1"/>
</dbReference>
<dbReference type="PANTHER" id="PTHR12302:SF3">
    <property type="entry name" value="SERINE_THREONINE-PROTEIN KINASE 31"/>
    <property type="match status" value="1"/>
</dbReference>
<dbReference type="Pfam" id="PF00565">
    <property type="entry name" value="SNase"/>
    <property type="match status" value="1"/>
</dbReference>
<dbReference type="SMART" id="SM00318">
    <property type="entry name" value="SNc"/>
    <property type="match status" value="1"/>
</dbReference>
<dbReference type="SUPFAM" id="SSF50199">
    <property type="entry name" value="Staphylococcal nuclease"/>
    <property type="match status" value="1"/>
</dbReference>
<dbReference type="PROSITE" id="PS50830">
    <property type="entry name" value="TNASE_3"/>
    <property type="match status" value="1"/>
</dbReference>
<reference key="1">
    <citation type="journal article" date="2009" name="Nature">
        <title>Evolution of pathogenicity and sexual reproduction in eight Candida genomes.</title>
        <authorList>
            <person name="Butler G."/>
            <person name="Rasmussen M.D."/>
            <person name="Lin M.F."/>
            <person name="Santos M.A.S."/>
            <person name="Sakthikumar S."/>
            <person name="Munro C.A."/>
            <person name="Rheinbay E."/>
            <person name="Grabherr M."/>
            <person name="Forche A."/>
            <person name="Reedy J.L."/>
            <person name="Agrafioti I."/>
            <person name="Arnaud M.B."/>
            <person name="Bates S."/>
            <person name="Brown A.J.P."/>
            <person name="Brunke S."/>
            <person name="Costanzo M.C."/>
            <person name="Fitzpatrick D.A."/>
            <person name="de Groot P.W.J."/>
            <person name="Harris D."/>
            <person name="Hoyer L.L."/>
            <person name="Hube B."/>
            <person name="Klis F.M."/>
            <person name="Kodira C."/>
            <person name="Lennard N."/>
            <person name="Logue M.E."/>
            <person name="Martin R."/>
            <person name="Neiman A.M."/>
            <person name="Nikolaou E."/>
            <person name="Quail M.A."/>
            <person name="Quinn J."/>
            <person name="Santos M.C."/>
            <person name="Schmitzberger F.F."/>
            <person name="Sherlock G."/>
            <person name="Shah P."/>
            <person name="Silverstein K.A.T."/>
            <person name="Skrzypek M.S."/>
            <person name="Soll D."/>
            <person name="Staggs R."/>
            <person name="Stansfield I."/>
            <person name="Stumpf M.P.H."/>
            <person name="Sudbery P.E."/>
            <person name="Srikantha T."/>
            <person name="Zeng Q."/>
            <person name="Berman J."/>
            <person name="Berriman M."/>
            <person name="Heitman J."/>
            <person name="Gow N.A.R."/>
            <person name="Lorenz M.C."/>
            <person name="Birren B.W."/>
            <person name="Kellis M."/>
            <person name="Cuomo C.A."/>
        </authorList>
    </citation>
    <scope>NUCLEOTIDE SEQUENCE [LARGE SCALE GENOMIC DNA]</scope>
    <source>
        <strain>WO-1</strain>
    </source>
</reference>
<sequence length="235" mass="27374">MPPIPAEPTENISIFHPKVLLLSAGVTTSLFFGYKFYKRYIKRIRTYLDLTPSIIENNTKLYGYVTRVGDGDNFRFYHTPGGWFFGWGWLRKIPTTRKDLKDETLMIRLCGVDAPEGAHFGKPAQPYSKEALYWLREYVDGKYVTITPYSIDQYKRVVARAQIWKWTGRKDVSAEMLKVGYAIVYEGKAEAEFGDNEDWYRKLESRAKLLRKGVWSLGKNLTTPGEFKRIHYRGE</sequence>
<keyword id="KW-0106">Calcium</keyword>
<keyword id="KW-0255">Endonuclease</keyword>
<keyword id="KW-0378">Hydrolase</keyword>
<keyword id="KW-0472">Membrane</keyword>
<keyword id="KW-0479">Metal-binding</keyword>
<keyword id="KW-0496">Mitochondrion</keyword>
<keyword id="KW-0540">Nuclease</keyword>
<keyword id="KW-0812">Transmembrane</keyword>
<keyword id="KW-1133">Transmembrane helix</keyword>
<accession>C4YFU9</accession>
<gene>
    <name type="primary">LCL3</name>
    <name type="ORF">CAWG_00075</name>
</gene>
<evidence type="ECO:0000250" key="1"/>
<evidence type="ECO:0000255" key="2"/>
<evidence type="ECO:0000255" key="3">
    <source>
        <dbReference type="PROSITE-ProRule" id="PRU00272"/>
    </source>
</evidence>
<evidence type="ECO:0000305" key="4"/>